<name>MSCL_SHEON</name>
<sequence>MSLIQEFKAFASRGNVIDMAVGIIIGAAFGKIVSSFVADIIMPPIGIILGGVNFSDLSVVLLAAQGDAPAVVIAYGKFIQTVIDFTIIAFAIFMGLKAINSLKRKQEEAPPASPAPTKDQELLSEIRDLLKAQQEK</sequence>
<proteinExistence type="inferred from homology"/>
<gene>
    <name evidence="1" type="primary">mscL</name>
    <name type="ordered locus">SO_0522</name>
</gene>
<organism>
    <name type="scientific">Shewanella oneidensis (strain ATCC 700550 / JCM 31522 / CIP 106686 / LMG 19005 / NCIMB 14063 / MR-1)</name>
    <dbReference type="NCBI Taxonomy" id="211586"/>
    <lineage>
        <taxon>Bacteria</taxon>
        <taxon>Pseudomonadati</taxon>
        <taxon>Pseudomonadota</taxon>
        <taxon>Gammaproteobacteria</taxon>
        <taxon>Alteromonadales</taxon>
        <taxon>Shewanellaceae</taxon>
        <taxon>Shewanella</taxon>
    </lineage>
</organism>
<dbReference type="EMBL" id="AE014299">
    <property type="protein sequence ID" value="AAN53603.1"/>
    <property type="molecule type" value="Genomic_DNA"/>
</dbReference>
<dbReference type="RefSeq" id="NP_716158.1">
    <property type="nucleotide sequence ID" value="NC_004347.2"/>
</dbReference>
<dbReference type="RefSeq" id="WP_011070864.1">
    <property type="nucleotide sequence ID" value="NC_004347.2"/>
</dbReference>
<dbReference type="SMR" id="Q8EJE5"/>
<dbReference type="STRING" id="211586.SO_0522"/>
<dbReference type="PaxDb" id="211586-SO_0522"/>
<dbReference type="KEGG" id="son:SO_0522"/>
<dbReference type="PATRIC" id="fig|211586.12.peg.502"/>
<dbReference type="eggNOG" id="COG1970">
    <property type="taxonomic scope" value="Bacteria"/>
</dbReference>
<dbReference type="HOGENOM" id="CLU_095787_0_0_6"/>
<dbReference type="OrthoDB" id="9810350at2"/>
<dbReference type="PhylomeDB" id="Q8EJE5"/>
<dbReference type="BioCyc" id="SONE211586:G1GMP-494-MONOMER"/>
<dbReference type="Proteomes" id="UP000008186">
    <property type="component" value="Chromosome"/>
</dbReference>
<dbReference type="GO" id="GO:0016020">
    <property type="term" value="C:membrane"/>
    <property type="evidence" value="ECO:0000318"/>
    <property type="project" value="GO_Central"/>
</dbReference>
<dbReference type="GO" id="GO:0005886">
    <property type="term" value="C:plasma membrane"/>
    <property type="evidence" value="ECO:0007669"/>
    <property type="project" value="UniProtKB-SubCell"/>
</dbReference>
<dbReference type="GO" id="GO:0008381">
    <property type="term" value="F:mechanosensitive monoatomic ion channel activity"/>
    <property type="evidence" value="ECO:0000318"/>
    <property type="project" value="GO_Central"/>
</dbReference>
<dbReference type="GO" id="GO:0006811">
    <property type="term" value="P:monoatomic ion transport"/>
    <property type="evidence" value="ECO:0000318"/>
    <property type="project" value="GO_Central"/>
</dbReference>
<dbReference type="FunFam" id="1.10.1200.120:FF:000001">
    <property type="entry name" value="Large-conductance mechanosensitive channel"/>
    <property type="match status" value="1"/>
</dbReference>
<dbReference type="Gene3D" id="1.10.1200.120">
    <property type="entry name" value="Large-conductance mechanosensitive channel, MscL, domain 1"/>
    <property type="match status" value="1"/>
</dbReference>
<dbReference type="HAMAP" id="MF_00115">
    <property type="entry name" value="MscL"/>
    <property type="match status" value="1"/>
</dbReference>
<dbReference type="InterPro" id="IPR019823">
    <property type="entry name" value="Mechanosensitive_channel_CS"/>
</dbReference>
<dbReference type="InterPro" id="IPR001185">
    <property type="entry name" value="MS_channel"/>
</dbReference>
<dbReference type="InterPro" id="IPR037673">
    <property type="entry name" value="MSC/AndL"/>
</dbReference>
<dbReference type="InterPro" id="IPR036019">
    <property type="entry name" value="MscL_channel"/>
</dbReference>
<dbReference type="NCBIfam" id="TIGR00220">
    <property type="entry name" value="mscL"/>
    <property type="match status" value="1"/>
</dbReference>
<dbReference type="NCBIfam" id="NF001843">
    <property type="entry name" value="PRK00567.1-4"/>
    <property type="match status" value="1"/>
</dbReference>
<dbReference type="PANTHER" id="PTHR30266:SF2">
    <property type="entry name" value="LARGE-CONDUCTANCE MECHANOSENSITIVE CHANNEL"/>
    <property type="match status" value="1"/>
</dbReference>
<dbReference type="PANTHER" id="PTHR30266">
    <property type="entry name" value="MECHANOSENSITIVE CHANNEL MSCL"/>
    <property type="match status" value="1"/>
</dbReference>
<dbReference type="Pfam" id="PF01741">
    <property type="entry name" value="MscL"/>
    <property type="match status" value="1"/>
</dbReference>
<dbReference type="PRINTS" id="PR01264">
    <property type="entry name" value="MECHCHANNEL"/>
</dbReference>
<dbReference type="SUPFAM" id="SSF81330">
    <property type="entry name" value="Gated mechanosensitive channel"/>
    <property type="match status" value="1"/>
</dbReference>
<dbReference type="PROSITE" id="PS01327">
    <property type="entry name" value="MSCL"/>
    <property type="match status" value="1"/>
</dbReference>
<feature type="chain" id="PRO_0000238033" description="Large-conductance mechanosensitive channel">
    <location>
        <begin position="1"/>
        <end position="136"/>
    </location>
</feature>
<feature type="transmembrane region" description="Helical" evidence="1">
    <location>
        <begin position="9"/>
        <end position="29"/>
    </location>
</feature>
<feature type="transmembrane region" description="Helical" evidence="1">
    <location>
        <begin position="32"/>
        <end position="52"/>
    </location>
</feature>
<feature type="transmembrane region" description="Helical" evidence="1">
    <location>
        <begin position="54"/>
        <end position="74"/>
    </location>
</feature>
<feature type="transmembrane region" description="Helical" evidence="1">
    <location>
        <begin position="79"/>
        <end position="99"/>
    </location>
</feature>
<evidence type="ECO:0000255" key="1">
    <source>
        <dbReference type="HAMAP-Rule" id="MF_00115"/>
    </source>
</evidence>
<protein>
    <recommendedName>
        <fullName evidence="1">Large-conductance mechanosensitive channel</fullName>
    </recommendedName>
</protein>
<accession>Q8EJE5</accession>
<reference key="1">
    <citation type="journal article" date="2002" name="Nat. Biotechnol.">
        <title>Genome sequence of the dissimilatory metal ion-reducing bacterium Shewanella oneidensis.</title>
        <authorList>
            <person name="Heidelberg J.F."/>
            <person name="Paulsen I.T."/>
            <person name="Nelson K.E."/>
            <person name="Gaidos E.J."/>
            <person name="Nelson W.C."/>
            <person name="Read T.D."/>
            <person name="Eisen J.A."/>
            <person name="Seshadri R."/>
            <person name="Ward N.L."/>
            <person name="Methe B.A."/>
            <person name="Clayton R.A."/>
            <person name="Meyer T."/>
            <person name="Tsapin A."/>
            <person name="Scott J."/>
            <person name="Beanan M.J."/>
            <person name="Brinkac L.M."/>
            <person name="Daugherty S.C."/>
            <person name="DeBoy R.T."/>
            <person name="Dodson R.J."/>
            <person name="Durkin A.S."/>
            <person name="Haft D.H."/>
            <person name="Kolonay J.F."/>
            <person name="Madupu R."/>
            <person name="Peterson J.D."/>
            <person name="Umayam L.A."/>
            <person name="White O."/>
            <person name="Wolf A.M."/>
            <person name="Vamathevan J.J."/>
            <person name="Weidman J.F."/>
            <person name="Impraim M."/>
            <person name="Lee K."/>
            <person name="Berry K.J."/>
            <person name="Lee C."/>
            <person name="Mueller J."/>
            <person name="Khouri H.M."/>
            <person name="Gill J."/>
            <person name="Utterback T.R."/>
            <person name="McDonald L.A."/>
            <person name="Feldblyum T.V."/>
            <person name="Smith H.O."/>
            <person name="Venter J.C."/>
            <person name="Nealson K.H."/>
            <person name="Fraser C.M."/>
        </authorList>
    </citation>
    <scope>NUCLEOTIDE SEQUENCE [LARGE SCALE GENOMIC DNA]</scope>
    <source>
        <strain>ATCC 700550 / JCM 31522 / CIP 106686 / LMG 19005 / NCIMB 14063 / MR-1</strain>
    </source>
</reference>
<comment type="function">
    <text evidence="1">Channel that opens in response to stretch forces in the membrane lipid bilayer. May participate in the regulation of osmotic pressure changes within the cell.</text>
</comment>
<comment type="subunit">
    <text evidence="1">Homopentamer.</text>
</comment>
<comment type="subcellular location">
    <subcellularLocation>
        <location evidence="1">Cell inner membrane</location>
        <topology evidence="1">Multi-pass membrane protein</topology>
    </subcellularLocation>
</comment>
<comment type="similarity">
    <text evidence="1">Belongs to the MscL family.</text>
</comment>
<keyword id="KW-0997">Cell inner membrane</keyword>
<keyword id="KW-1003">Cell membrane</keyword>
<keyword id="KW-0407">Ion channel</keyword>
<keyword id="KW-0406">Ion transport</keyword>
<keyword id="KW-0472">Membrane</keyword>
<keyword id="KW-1185">Reference proteome</keyword>
<keyword id="KW-0812">Transmembrane</keyword>
<keyword id="KW-1133">Transmembrane helix</keyword>
<keyword id="KW-0813">Transport</keyword>